<dbReference type="EMBL" id="CR932000">
    <property type="status" value="NOT_ANNOTATED_CDS"/>
    <property type="molecule type" value="Genomic_DNA"/>
</dbReference>
<dbReference type="RefSeq" id="NP_001073484.2">
    <property type="nucleotide sequence ID" value="NM_001080015.2"/>
</dbReference>
<dbReference type="RefSeq" id="XP_017213733.1">
    <property type="nucleotide sequence ID" value="XM_017358244.1"/>
</dbReference>
<dbReference type="FunCoup" id="F1QLG5">
    <property type="interactions" value="7"/>
</dbReference>
<dbReference type="STRING" id="7955.ENSDARP00000083553"/>
<dbReference type="PaxDb" id="7955-ENSDARP00000083553"/>
<dbReference type="Ensembl" id="ENSDART00000089120">
    <property type="protein sequence ID" value="ENSDARP00000083553"/>
    <property type="gene ID" value="ENSDARG00000062002"/>
</dbReference>
<dbReference type="Ensembl" id="ENSDART00000179954">
    <property type="protein sequence ID" value="ENSDARP00000145408"/>
    <property type="gene ID" value="ENSDARG00000115617"/>
</dbReference>
<dbReference type="GeneID" id="564637"/>
<dbReference type="KEGG" id="dre:564637"/>
<dbReference type="AGR" id="ZFIN:ZDB-GENE-061215-112"/>
<dbReference type="CTD" id="564637"/>
<dbReference type="ZFIN" id="ZDB-GENE-061215-112">
    <property type="gene designation" value="adnpa"/>
</dbReference>
<dbReference type="eggNOG" id="ENOG502QSYX">
    <property type="taxonomic scope" value="Eukaryota"/>
</dbReference>
<dbReference type="HOGENOM" id="CLU_009119_0_0_1"/>
<dbReference type="InParanoid" id="F1QLG5"/>
<dbReference type="OMA" id="EYCKEAA"/>
<dbReference type="OrthoDB" id="8891572at2759"/>
<dbReference type="TreeFam" id="TF328818"/>
<dbReference type="PRO" id="PR:F1QLG5"/>
<dbReference type="Proteomes" id="UP000000437">
    <property type="component" value="Alternate scaffold 11"/>
</dbReference>
<dbReference type="Proteomes" id="UP000000437">
    <property type="component" value="Chromosome 11"/>
</dbReference>
<dbReference type="Bgee" id="ENSDARG00000062002">
    <property type="expression patterns" value="Expressed in cleaving embryo and 27 other cell types or tissues"/>
</dbReference>
<dbReference type="GO" id="GO:0005737">
    <property type="term" value="C:cytoplasm"/>
    <property type="evidence" value="ECO:0000314"/>
    <property type="project" value="UniProtKB"/>
</dbReference>
<dbReference type="GO" id="GO:0005634">
    <property type="term" value="C:nucleus"/>
    <property type="evidence" value="ECO:0000314"/>
    <property type="project" value="UniProtKB"/>
</dbReference>
<dbReference type="GO" id="GO:0008013">
    <property type="term" value="F:beta-catenin binding"/>
    <property type="evidence" value="ECO:0000353"/>
    <property type="project" value="UniProtKB"/>
</dbReference>
<dbReference type="GO" id="GO:0003677">
    <property type="term" value="F:DNA binding"/>
    <property type="evidence" value="ECO:0007669"/>
    <property type="project" value="UniProtKB-KW"/>
</dbReference>
<dbReference type="GO" id="GO:0008270">
    <property type="term" value="F:zinc ion binding"/>
    <property type="evidence" value="ECO:0007669"/>
    <property type="project" value="UniProtKB-KW"/>
</dbReference>
<dbReference type="GO" id="GO:0043249">
    <property type="term" value="P:erythrocyte maturation"/>
    <property type="evidence" value="ECO:0000315"/>
    <property type="project" value="ZFIN"/>
</dbReference>
<dbReference type="GO" id="GO:0010468">
    <property type="term" value="P:regulation of gene expression"/>
    <property type="evidence" value="ECO:0000318"/>
    <property type="project" value="GO_Central"/>
</dbReference>
<dbReference type="GO" id="GO:0050767">
    <property type="term" value="P:regulation of neurogenesis"/>
    <property type="evidence" value="ECO:0000315"/>
    <property type="project" value="ZFIN"/>
</dbReference>
<dbReference type="GO" id="GO:0016055">
    <property type="term" value="P:Wnt signaling pathway"/>
    <property type="evidence" value="ECO:0000315"/>
    <property type="project" value="ZFIN"/>
</dbReference>
<dbReference type="CDD" id="cd00086">
    <property type="entry name" value="homeodomain"/>
    <property type="match status" value="1"/>
</dbReference>
<dbReference type="FunFam" id="1.10.10.60:FF:000199">
    <property type="entry name" value="Activity-dependent neuroprotector homeobox b"/>
    <property type="match status" value="1"/>
</dbReference>
<dbReference type="Gene3D" id="3.30.160.60">
    <property type="entry name" value="Classic Zinc Finger"/>
    <property type="match status" value="1"/>
</dbReference>
<dbReference type="Gene3D" id="1.10.10.60">
    <property type="entry name" value="Homeodomain-like"/>
    <property type="match status" value="1"/>
</dbReference>
<dbReference type="InterPro" id="IPR038861">
    <property type="entry name" value="ADNP/ADNP2"/>
</dbReference>
<dbReference type="InterPro" id="IPR045762">
    <property type="entry name" value="ADNP_Znf"/>
</dbReference>
<dbReference type="InterPro" id="IPR001356">
    <property type="entry name" value="HD"/>
</dbReference>
<dbReference type="InterPro" id="IPR009057">
    <property type="entry name" value="Homeodomain-like_sf"/>
</dbReference>
<dbReference type="InterPro" id="IPR013087">
    <property type="entry name" value="Znf_C2H2_type"/>
</dbReference>
<dbReference type="PANTHER" id="PTHR15740:SF1">
    <property type="entry name" value="ACTIVITY-DEPENDENT NEUROPROTECTOR HOMEOBOX PROTEIN"/>
    <property type="match status" value="1"/>
</dbReference>
<dbReference type="PANTHER" id="PTHR15740">
    <property type="entry name" value="NEUROPROTECTIVE PEPTIDE-CONTAINING PROTEIN"/>
    <property type="match status" value="1"/>
</dbReference>
<dbReference type="Pfam" id="PF19627">
    <property type="entry name" value="ADNP_N"/>
    <property type="match status" value="1"/>
</dbReference>
<dbReference type="Pfam" id="PF00046">
    <property type="entry name" value="Homeodomain"/>
    <property type="match status" value="1"/>
</dbReference>
<dbReference type="SMART" id="SM00389">
    <property type="entry name" value="HOX"/>
    <property type="match status" value="1"/>
</dbReference>
<dbReference type="SMART" id="SM00355">
    <property type="entry name" value="ZnF_C2H2"/>
    <property type="match status" value="8"/>
</dbReference>
<dbReference type="SUPFAM" id="SSF46689">
    <property type="entry name" value="Homeodomain-like"/>
    <property type="match status" value="1"/>
</dbReference>
<dbReference type="PROSITE" id="PS00028">
    <property type="entry name" value="ZINC_FINGER_C2H2_1"/>
    <property type="match status" value="1"/>
</dbReference>
<dbReference type="PROSITE" id="PS50157">
    <property type="entry name" value="ZINC_FINGER_C2H2_2"/>
    <property type="match status" value="1"/>
</dbReference>
<proteinExistence type="evidence at protein level"/>
<comment type="function">
    <text evidence="5 6">May be involved in transcriptional regulation (PubMed:23071114, PubMed:32533114). Positively modulates wnt-beta-catenin/ctnnb1 signaling (PubMed:32533114). Required for embryonic neurogenesis (PubMed:32533114). Required for progression through late erythroid differentiation (PubMed:23071114).</text>
</comment>
<comment type="subunit">
    <text evidence="6">Interacts with catenin beta-1/ctnnb1.</text>
</comment>
<comment type="subcellular location">
    <subcellularLocation>
        <location evidence="3">Nucleus</location>
    </subcellularLocation>
</comment>
<comment type="developmental stage">
    <text evidence="5">Expressed during all stages of embryonic development, from 1-cell to 72 hours post-fertilization (hpf) (PubMed:23071114). Expressed in the forebrain, the midbrain, the mid-hindbrain boundary and eye area at 24 hpf (PubMed:23071114).</text>
</comment>
<comment type="disruption phenotype">
    <text evidence="5 6">Knockout is viable, without apparent morphological defects, but, in an adnpb mutant background, some embryos have axis formation defects and at 36-48 hours post-fertilization (hpf), have abnormal body morphology with significant brain neuron death (PubMed:32533114). Expression of neural genes such as dlx5a, neurod1, and phox2a is greatly reduced in day 2 embryos in an adnpb mutant background (PubMed:23071114). Beta-catenin ctnnb1 levels reduced in an adnpb mutant background (PubMed:32533114). Morpholino knockdown reduces numbers of blood cells in circulation from 28 hours hpf (PubMed:23071114). Significant reduction in hemoglobin content at 48 and 72 hpf (PubMed:23071114). Developmental delay, distorted tail morphology, and much smaller head and eyes (PubMed:23071114). Some embryos recovered blood circulation at day 4 after knockdown, whereas others became severely edematous at day 4-5 and died by about 7 days (PubMed:23071114).</text>
</comment>
<reference key="1">
    <citation type="journal article" date="2013" name="Nature">
        <title>The zebrafish reference genome sequence and its relationship to the human genome.</title>
        <authorList>
            <person name="Howe K."/>
            <person name="Clark M.D."/>
            <person name="Torroja C.F."/>
            <person name="Torrance J."/>
            <person name="Berthelot C."/>
            <person name="Muffato M."/>
            <person name="Collins J.E."/>
            <person name="Humphray S."/>
            <person name="McLaren K."/>
            <person name="Matthews L."/>
            <person name="McLaren S."/>
            <person name="Sealy I."/>
            <person name="Caccamo M."/>
            <person name="Churcher C."/>
            <person name="Scott C."/>
            <person name="Barrett J.C."/>
            <person name="Koch R."/>
            <person name="Rauch G.J."/>
            <person name="White S."/>
            <person name="Chow W."/>
            <person name="Kilian B."/>
            <person name="Quintais L.T."/>
            <person name="Guerra-Assuncao J.A."/>
            <person name="Zhou Y."/>
            <person name="Gu Y."/>
            <person name="Yen J."/>
            <person name="Vogel J.H."/>
            <person name="Eyre T."/>
            <person name="Redmond S."/>
            <person name="Banerjee R."/>
            <person name="Chi J."/>
            <person name="Fu B."/>
            <person name="Langley E."/>
            <person name="Maguire S.F."/>
            <person name="Laird G.K."/>
            <person name="Lloyd D."/>
            <person name="Kenyon E."/>
            <person name="Donaldson S."/>
            <person name="Sehra H."/>
            <person name="Almeida-King J."/>
            <person name="Loveland J."/>
            <person name="Trevanion S."/>
            <person name="Jones M."/>
            <person name="Quail M."/>
            <person name="Willey D."/>
            <person name="Hunt A."/>
            <person name="Burton J."/>
            <person name="Sims S."/>
            <person name="McLay K."/>
            <person name="Plumb B."/>
            <person name="Davis J."/>
            <person name="Clee C."/>
            <person name="Oliver K."/>
            <person name="Clark R."/>
            <person name="Riddle C."/>
            <person name="Elliot D."/>
            <person name="Threadgold G."/>
            <person name="Harden G."/>
            <person name="Ware D."/>
            <person name="Begum S."/>
            <person name="Mortimore B."/>
            <person name="Kerry G."/>
            <person name="Heath P."/>
            <person name="Phillimore B."/>
            <person name="Tracey A."/>
            <person name="Corby N."/>
            <person name="Dunn M."/>
            <person name="Johnson C."/>
            <person name="Wood J."/>
            <person name="Clark S."/>
            <person name="Pelan S."/>
            <person name="Griffiths G."/>
            <person name="Smith M."/>
            <person name="Glithero R."/>
            <person name="Howden P."/>
            <person name="Barker N."/>
            <person name="Lloyd C."/>
            <person name="Stevens C."/>
            <person name="Harley J."/>
            <person name="Holt K."/>
            <person name="Panagiotidis G."/>
            <person name="Lovell J."/>
            <person name="Beasley H."/>
            <person name="Henderson C."/>
            <person name="Gordon D."/>
            <person name="Auger K."/>
            <person name="Wright D."/>
            <person name="Collins J."/>
            <person name="Raisen C."/>
            <person name="Dyer L."/>
            <person name="Leung K."/>
            <person name="Robertson L."/>
            <person name="Ambridge K."/>
            <person name="Leongamornlert D."/>
            <person name="McGuire S."/>
            <person name="Gilderthorp R."/>
            <person name="Griffiths C."/>
            <person name="Manthravadi D."/>
            <person name="Nichol S."/>
            <person name="Barker G."/>
            <person name="Whitehead S."/>
            <person name="Kay M."/>
            <person name="Brown J."/>
            <person name="Murnane C."/>
            <person name="Gray E."/>
            <person name="Humphries M."/>
            <person name="Sycamore N."/>
            <person name="Barker D."/>
            <person name="Saunders D."/>
            <person name="Wallis J."/>
            <person name="Babbage A."/>
            <person name="Hammond S."/>
            <person name="Mashreghi-Mohammadi M."/>
            <person name="Barr L."/>
            <person name="Martin S."/>
            <person name="Wray P."/>
            <person name="Ellington A."/>
            <person name="Matthews N."/>
            <person name="Ellwood M."/>
            <person name="Woodmansey R."/>
            <person name="Clark G."/>
            <person name="Cooper J."/>
            <person name="Tromans A."/>
            <person name="Grafham D."/>
            <person name="Skuce C."/>
            <person name="Pandian R."/>
            <person name="Andrews R."/>
            <person name="Harrison E."/>
            <person name="Kimberley A."/>
            <person name="Garnett J."/>
            <person name="Fosker N."/>
            <person name="Hall R."/>
            <person name="Garner P."/>
            <person name="Kelly D."/>
            <person name="Bird C."/>
            <person name="Palmer S."/>
            <person name="Gehring I."/>
            <person name="Berger A."/>
            <person name="Dooley C.M."/>
            <person name="Ersan-Urun Z."/>
            <person name="Eser C."/>
            <person name="Geiger H."/>
            <person name="Geisler M."/>
            <person name="Karotki L."/>
            <person name="Kirn A."/>
            <person name="Konantz J."/>
            <person name="Konantz M."/>
            <person name="Oberlander M."/>
            <person name="Rudolph-Geiger S."/>
            <person name="Teucke M."/>
            <person name="Lanz C."/>
            <person name="Raddatz G."/>
            <person name="Osoegawa K."/>
            <person name="Zhu B."/>
            <person name="Rapp A."/>
            <person name="Widaa S."/>
            <person name="Langford C."/>
            <person name="Yang F."/>
            <person name="Schuster S.C."/>
            <person name="Carter N.P."/>
            <person name="Harrow J."/>
            <person name="Ning Z."/>
            <person name="Herrero J."/>
            <person name="Searle S.M."/>
            <person name="Enright A."/>
            <person name="Geisler R."/>
            <person name="Plasterk R.H."/>
            <person name="Lee C."/>
            <person name="Westerfield M."/>
            <person name="de Jong P.J."/>
            <person name="Zon L.I."/>
            <person name="Postlethwait J.H."/>
            <person name="Nusslein-Volhard C."/>
            <person name="Hubbard T.J."/>
            <person name="Roest Crollius H."/>
            <person name="Rogers J."/>
            <person name="Stemple D.L."/>
        </authorList>
    </citation>
    <scope>NUCLEOTIDE SEQUENCE [LARGE SCALE GENOMIC DNA]</scope>
    <source>
        <strain>Tuebingen</strain>
    </source>
</reference>
<reference evidence="8" key="2">
    <citation type="journal article" date="2012" name="J. Biol. Chem.">
        <title>Novel evolutionary-conserved role for the activity-dependent neuroprotective protein (ADNP) family that is important for erythropoiesis.</title>
        <authorList>
            <person name="Dresner E."/>
            <person name="Malishkevich A."/>
            <person name="Arviv C."/>
            <person name="Leibman Barak S."/>
            <person name="Alon S."/>
            <person name="Ofir R."/>
            <person name="Gothilf Y."/>
            <person name="Gozes I."/>
        </authorList>
    </citation>
    <scope>FUNCTION</scope>
    <scope>DEVELOPMENTAL STAGE</scope>
    <scope>DISRUPTION PHENOTYPE</scope>
</reference>
<reference evidence="8" key="3">
    <citation type="journal article" date="2020" name="Nat. Commun.">
        <title>ADNP promotes neural differentiation by modulating Wnt/beta-catenin signaling.</title>
        <authorList>
            <person name="Sun X."/>
            <person name="Peng X."/>
            <person name="Cao Y."/>
            <person name="Zhou Y."/>
            <person name="Sun Y."/>
        </authorList>
    </citation>
    <scope>FUNCTION</scope>
    <scope>INTERACTION WITH CTNNB1</scope>
    <scope>DISRUPTION PHENOTYPE</scope>
</reference>
<feature type="chain" id="PRO_0000456967" description="Activity-dependent neuroprotective protein a">
    <location>
        <begin position="1"/>
        <end position="969"/>
    </location>
</feature>
<feature type="zinc finger region" description="C2H2-type 1" evidence="2">
    <location>
        <begin position="74"/>
        <end position="97"/>
    </location>
</feature>
<feature type="zinc finger region" description="C2H2-type 2; atypical" evidence="2">
    <location>
        <begin position="107"/>
        <end position="129"/>
    </location>
</feature>
<feature type="zinc finger region" description="C2H2-type 3" evidence="2">
    <location>
        <begin position="169"/>
        <end position="192"/>
    </location>
</feature>
<feature type="zinc finger region" description="C2H2-type 4" evidence="2">
    <location>
        <begin position="221"/>
        <end position="244"/>
    </location>
</feature>
<feature type="zinc finger region" description="C2H2-type 5; atypical" evidence="2">
    <location>
        <begin position="401"/>
        <end position="423"/>
    </location>
</feature>
<feature type="zinc finger region" description="C2H2-type 6; atypical" evidence="2">
    <location>
        <begin position="443"/>
        <end position="464"/>
    </location>
</feature>
<feature type="zinc finger region" description="C2H2-type 7" evidence="2">
    <location>
        <begin position="466"/>
        <end position="489"/>
    </location>
</feature>
<feature type="zinc finger region" description="C2H2-type 8; atypical" evidence="2">
    <location>
        <begin position="583"/>
        <end position="608"/>
    </location>
</feature>
<feature type="zinc finger region" description="C2H2-type 9; atypical" evidence="2">
    <location>
        <begin position="623"/>
        <end position="647"/>
    </location>
</feature>
<feature type="DNA-binding region" description="Homeobox" evidence="3">
    <location>
        <begin position="732"/>
        <end position="774"/>
    </location>
</feature>
<feature type="region of interest" description="Disordered" evidence="4">
    <location>
        <begin position="659"/>
        <end position="689"/>
    </location>
</feature>
<feature type="region of interest" description="Disordered" evidence="4">
    <location>
        <begin position="911"/>
        <end position="949"/>
    </location>
</feature>
<feature type="compositionally biased region" description="Polar residues" evidence="4">
    <location>
        <begin position="929"/>
        <end position="946"/>
    </location>
</feature>
<organism>
    <name type="scientific">Danio rerio</name>
    <name type="common">Zebrafish</name>
    <name type="synonym">Brachydanio rerio</name>
    <dbReference type="NCBI Taxonomy" id="7955"/>
    <lineage>
        <taxon>Eukaryota</taxon>
        <taxon>Metazoa</taxon>
        <taxon>Chordata</taxon>
        <taxon>Craniata</taxon>
        <taxon>Vertebrata</taxon>
        <taxon>Euteleostomi</taxon>
        <taxon>Actinopterygii</taxon>
        <taxon>Neopterygii</taxon>
        <taxon>Teleostei</taxon>
        <taxon>Ostariophysi</taxon>
        <taxon>Cypriniformes</taxon>
        <taxon>Danionidae</taxon>
        <taxon>Danioninae</taxon>
        <taxon>Danio</taxon>
    </lineage>
</organism>
<sequence length="969" mass="108128">MFQLPVNNLTRLRKARKKVKRLLSDIGLDYCKEHVEDYKDVDPDDSDDSNESHLDLCTWDPTWTKSQDYRTKQFCCSDCPFASKYFSAYKNHFRNVHREDFESRILLNCSYCTYSGNKRTLETHVRLFHMPHNVMRQGVVGPHGAPVGAKDGMRVDKPMLGDRKELPVYYCKKCTYRDRLYNVVRRHIYREHFQHVATPYLGKNSEKQVNSGEAQANSHGIHCKSCHFTPRSYEALVQHVIEFHERIGHQVTAMIGHTNVIVPRLQTNPIQRGVPITSGVRPQTPQMNRFSMPKVVGLPVGNHFKQSLAGNSVPGQPVRVTLPDKAFVSSAVSHSHSGKHLGGFGVHGAAHLNAQSASFSPSLKSLPLSSSVHAATATLTSLQAKKASANALNTSQTQKWKICTICNELFPESAYSAHFEKEHQAEKVRAMAKYIMKIHNFTSKCLYCNRYLPSDSLLNHMLVHGLSCPHCHSTFHEVEKIVAHNRLAHPNEQGDQPTGSPLTFDLTLQQGNLKNVQLLVTTYNMKETPEAAAAAAAANQLSQNSAMPKPVKVSVRQPDTQSDSLVRNMSQSPVSQKKEVGKTLCPLCFTILKGPISDALAHHLRDSHQVLQTLHPVEKKLTYKCIHCLGVYTSNMTASTITLHLVHCRGVCQTPKGSKPITTGLRSPGAGSLKRELVTPDPSDPKRRKMVDQSRFYPTGFAEKPEEPIVLALDPKGYGDKSYEVRKAFLTAYFNRHPYPSQREVEKLAASLWLWKSDVASHFGNHRRLCDRDFTSRKPVVLLGFNMRLLSQIKHDMSFDDSCLFEVFDDEKSGYSRTSSFRLKSPIGFPADFIGSKQPLNTGQSSQSNCAFKTCPGSSSEPIAIDSDSDSELEVIPNENVSQHTPALRPSIVQSQTKGALLRESLRCERDVRANRSSPRVGPKVLDGSVSSSSPDEATWSGNMSSEESHYIPAGRFEVKGKKVGLLGR</sequence>
<keyword id="KW-0238">DNA-binding</keyword>
<keyword id="KW-0371">Homeobox</keyword>
<keyword id="KW-0479">Metal-binding</keyword>
<keyword id="KW-0539">Nucleus</keyword>
<keyword id="KW-1185">Reference proteome</keyword>
<keyword id="KW-0677">Repeat</keyword>
<keyword id="KW-0804">Transcription</keyword>
<keyword id="KW-0805">Transcription regulation</keyword>
<keyword id="KW-0862">Zinc</keyword>
<keyword id="KW-0863">Zinc-finger</keyword>
<evidence type="ECO:0000250" key="1">
    <source>
        <dbReference type="UniProtKB" id="Q9H2P0"/>
    </source>
</evidence>
<evidence type="ECO:0000255" key="2"/>
<evidence type="ECO:0000255" key="3">
    <source>
        <dbReference type="PROSITE-ProRule" id="PRU00108"/>
    </source>
</evidence>
<evidence type="ECO:0000256" key="4">
    <source>
        <dbReference type="SAM" id="MobiDB-lite"/>
    </source>
</evidence>
<evidence type="ECO:0000269" key="5">
    <source>
    </source>
</evidence>
<evidence type="ECO:0000269" key="6">
    <source>
    </source>
</evidence>
<evidence type="ECO:0000303" key="7">
    <source>
    </source>
</evidence>
<evidence type="ECO:0000305" key="8"/>
<evidence type="ECO:0000312" key="9">
    <source>
        <dbReference type="ZFIN" id="ZDB-GENE-061215-112"/>
    </source>
</evidence>
<protein>
    <recommendedName>
        <fullName evidence="1">Activity-dependent neuroprotective protein a</fullName>
    </recommendedName>
    <alternativeName>
        <fullName evidence="1">ADNP homeobox protein a</fullName>
    </alternativeName>
</protein>
<gene>
    <name evidence="9" type="primary">adnpa</name>
    <name evidence="7" type="synonym">adnp1a</name>
</gene>
<accession>F1QLG5</accession>
<accession>A0A8N7UYI5</accession>
<name>ADN1A_DANRE</name>